<feature type="chain" id="PRO_1000197519" description="Uroporphyrinogen decarboxylase">
    <location>
        <begin position="1"/>
        <end position="354"/>
    </location>
</feature>
<feature type="binding site" evidence="1">
    <location>
        <begin position="27"/>
        <end position="31"/>
    </location>
    <ligand>
        <name>substrate</name>
    </ligand>
</feature>
<feature type="binding site" evidence="1">
    <location>
        <position position="77"/>
    </location>
    <ligand>
        <name>substrate</name>
    </ligand>
</feature>
<feature type="binding site" evidence="1">
    <location>
        <position position="154"/>
    </location>
    <ligand>
        <name>substrate</name>
    </ligand>
</feature>
<feature type="binding site" evidence="1">
    <location>
        <position position="209"/>
    </location>
    <ligand>
        <name>substrate</name>
    </ligand>
</feature>
<feature type="binding site" evidence="1">
    <location>
        <position position="327"/>
    </location>
    <ligand>
        <name>substrate</name>
    </ligand>
</feature>
<feature type="site" description="Transition state stabilizer" evidence="1">
    <location>
        <position position="77"/>
    </location>
</feature>
<name>DCUP_ECO27</name>
<protein>
    <recommendedName>
        <fullName evidence="1">Uroporphyrinogen decarboxylase</fullName>
        <shortName evidence="1">UPD</shortName>
        <shortName evidence="1">URO-D</shortName>
        <ecNumber evidence="1">4.1.1.37</ecNumber>
    </recommendedName>
</protein>
<gene>
    <name evidence="1" type="primary">hemE</name>
    <name type="ordered locus">E2348C_4304</name>
</gene>
<dbReference type="EC" id="4.1.1.37" evidence="1"/>
<dbReference type="EMBL" id="FM180568">
    <property type="protein sequence ID" value="CAS11852.1"/>
    <property type="molecule type" value="Genomic_DNA"/>
</dbReference>
<dbReference type="RefSeq" id="WP_000137653.1">
    <property type="nucleotide sequence ID" value="NC_011601.1"/>
</dbReference>
<dbReference type="SMR" id="B7UPF2"/>
<dbReference type="KEGG" id="ecg:E2348C_4304"/>
<dbReference type="HOGENOM" id="CLU_040933_0_0_6"/>
<dbReference type="UniPathway" id="UPA00251">
    <property type="reaction ID" value="UER00321"/>
</dbReference>
<dbReference type="Proteomes" id="UP000008205">
    <property type="component" value="Chromosome"/>
</dbReference>
<dbReference type="GO" id="GO:0005829">
    <property type="term" value="C:cytosol"/>
    <property type="evidence" value="ECO:0007669"/>
    <property type="project" value="TreeGrafter"/>
</dbReference>
<dbReference type="GO" id="GO:0004853">
    <property type="term" value="F:uroporphyrinogen decarboxylase activity"/>
    <property type="evidence" value="ECO:0007669"/>
    <property type="project" value="UniProtKB-UniRule"/>
</dbReference>
<dbReference type="GO" id="GO:0019353">
    <property type="term" value="P:protoporphyrinogen IX biosynthetic process from glutamate"/>
    <property type="evidence" value="ECO:0007669"/>
    <property type="project" value="TreeGrafter"/>
</dbReference>
<dbReference type="CDD" id="cd00717">
    <property type="entry name" value="URO-D"/>
    <property type="match status" value="1"/>
</dbReference>
<dbReference type="FunFam" id="3.20.20.210:FF:000001">
    <property type="entry name" value="Uroporphyrinogen decarboxylase"/>
    <property type="match status" value="1"/>
</dbReference>
<dbReference type="Gene3D" id="3.20.20.210">
    <property type="match status" value="1"/>
</dbReference>
<dbReference type="HAMAP" id="MF_00218">
    <property type="entry name" value="URO_D"/>
    <property type="match status" value="1"/>
</dbReference>
<dbReference type="InterPro" id="IPR038071">
    <property type="entry name" value="UROD/MetE-like_sf"/>
</dbReference>
<dbReference type="InterPro" id="IPR006361">
    <property type="entry name" value="Uroporphyrinogen_deCO2ase_HemE"/>
</dbReference>
<dbReference type="InterPro" id="IPR000257">
    <property type="entry name" value="Uroporphyrinogen_deCOase"/>
</dbReference>
<dbReference type="NCBIfam" id="TIGR01464">
    <property type="entry name" value="hemE"/>
    <property type="match status" value="1"/>
</dbReference>
<dbReference type="PANTHER" id="PTHR21091">
    <property type="entry name" value="METHYLTETRAHYDROFOLATE:HOMOCYSTEINE METHYLTRANSFERASE RELATED"/>
    <property type="match status" value="1"/>
</dbReference>
<dbReference type="PANTHER" id="PTHR21091:SF169">
    <property type="entry name" value="UROPORPHYRINOGEN DECARBOXYLASE"/>
    <property type="match status" value="1"/>
</dbReference>
<dbReference type="Pfam" id="PF01208">
    <property type="entry name" value="URO-D"/>
    <property type="match status" value="1"/>
</dbReference>
<dbReference type="SUPFAM" id="SSF51726">
    <property type="entry name" value="UROD/MetE-like"/>
    <property type="match status" value="1"/>
</dbReference>
<dbReference type="PROSITE" id="PS00906">
    <property type="entry name" value="UROD_1"/>
    <property type="match status" value="1"/>
</dbReference>
<dbReference type="PROSITE" id="PS00907">
    <property type="entry name" value="UROD_2"/>
    <property type="match status" value="1"/>
</dbReference>
<comment type="function">
    <text evidence="1">Catalyzes the decarboxylation of four acetate groups of uroporphyrinogen-III to yield coproporphyrinogen-III.</text>
</comment>
<comment type="catalytic activity">
    <reaction evidence="1">
        <text>uroporphyrinogen III + 4 H(+) = coproporphyrinogen III + 4 CO2</text>
        <dbReference type="Rhea" id="RHEA:19865"/>
        <dbReference type="ChEBI" id="CHEBI:15378"/>
        <dbReference type="ChEBI" id="CHEBI:16526"/>
        <dbReference type="ChEBI" id="CHEBI:57308"/>
        <dbReference type="ChEBI" id="CHEBI:57309"/>
        <dbReference type="EC" id="4.1.1.37"/>
    </reaction>
</comment>
<comment type="pathway">
    <text evidence="1">Porphyrin-containing compound metabolism; protoporphyrin-IX biosynthesis; coproporphyrinogen-III from 5-aminolevulinate: step 4/4.</text>
</comment>
<comment type="subunit">
    <text evidence="1">Homodimer.</text>
</comment>
<comment type="subcellular location">
    <subcellularLocation>
        <location evidence="1">Cytoplasm</location>
    </subcellularLocation>
</comment>
<comment type="similarity">
    <text evidence="1">Belongs to the uroporphyrinogen decarboxylase family.</text>
</comment>
<accession>B7UPF2</accession>
<sequence length="354" mass="39234">MTELKNDRYLRALLRQPVDVTPVWMMRQAGRYLPEYKATRAQAGDFMSLCKNAELACEVTLQPLRRYPLDAAILFSDILTVPDAMGLGLYFEAGEGPRFTSPVTCKADVDKLPIPDPEDELGYVMNAVRTIRRELKGEVPLIGFSGSPWTLATYMVEGGSSKAFTVIKKMMYADPQALHALLDKLAKSVTLYLNAQIKAGAQAVMIFDTWGGVLTGRDYQQFSLYYMHKIVDGLLRENDGRRVPVTLFTKGGGQWLEAMAETGCDALGLDWTTDIADARRRVGNKVALQGNMDPSMLYAPPARIEEEVASILAGFGHGEGHVFNLGHGIHQDVPPEHAGVFVEAVHRLSEQYHR</sequence>
<keyword id="KW-0963">Cytoplasm</keyword>
<keyword id="KW-0210">Decarboxylase</keyword>
<keyword id="KW-0456">Lyase</keyword>
<keyword id="KW-0627">Porphyrin biosynthesis</keyword>
<keyword id="KW-1185">Reference proteome</keyword>
<organism>
    <name type="scientific">Escherichia coli O127:H6 (strain E2348/69 / EPEC)</name>
    <dbReference type="NCBI Taxonomy" id="574521"/>
    <lineage>
        <taxon>Bacteria</taxon>
        <taxon>Pseudomonadati</taxon>
        <taxon>Pseudomonadota</taxon>
        <taxon>Gammaproteobacteria</taxon>
        <taxon>Enterobacterales</taxon>
        <taxon>Enterobacteriaceae</taxon>
        <taxon>Escherichia</taxon>
    </lineage>
</organism>
<reference key="1">
    <citation type="journal article" date="2009" name="J. Bacteriol.">
        <title>Complete genome sequence and comparative genome analysis of enteropathogenic Escherichia coli O127:H6 strain E2348/69.</title>
        <authorList>
            <person name="Iguchi A."/>
            <person name="Thomson N.R."/>
            <person name="Ogura Y."/>
            <person name="Saunders D."/>
            <person name="Ooka T."/>
            <person name="Henderson I.R."/>
            <person name="Harris D."/>
            <person name="Asadulghani M."/>
            <person name="Kurokawa K."/>
            <person name="Dean P."/>
            <person name="Kenny B."/>
            <person name="Quail M.A."/>
            <person name="Thurston S."/>
            <person name="Dougan G."/>
            <person name="Hayashi T."/>
            <person name="Parkhill J."/>
            <person name="Frankel G."/>
        </authorList>
    </citation>
    <scope>NUCLEOTIDE SEQUENCE [LARGE SCALE GENOMIC DNA]</scope>
    <source>
        <strain>E2348/69 / EPEC</strain>
    </source>
</reference>
<proteinExistence type="inferred from homology"/>
<evidence type="ECO:0000255" key="1">
    <source>
        <dbReference type="HAMAP-Rule" id="MF_00218"/>
    </source>
</evidence>